<accession>Q9LPL6</accession>
<comment type="function">
    <text evidence="9">Might contribute to the loading of the ESCRT machinery.</text>
</comment>
<comment type="subcellular location">
    <subcellularLocation>
        <location evidence="8">Membrane</location>
        <topology evidence="8">Peripheral membrane protein</topology>
    </subcellularLocation>
</comment>
<comment type="tissue specificity">
    <text evidence="5">Preferentially expressed in cauline leaves.</text>
</comment>
<comment type="similarity">
    <text evidence="8">Belongs to the TOM1 family.</text>
</comment>
<sequence>MANNAAACAERATNDMLIGPDWAINIELCDIINMEPSQAKEAVKVLKKRLGSKNSKVQILALYALETLSKNCGESVYQLIVDRDILPDMVKIVKKKPDLTVREKILSLLDTWQEAFGGSGGRFPQYYNAYNELRSAGIEFPPRTESSVPFFTPPQTQPIVAQATASDEDAAIQASLQSDDASALSMEEIQSAQGSVDVLTDMLGALDPSHPEGLKEELIVDLVEQCRTYQRRVMALVNTTSDEELMCQGLALNDNLQRVLQHHDDKAKGNSVPATAPTPIPLVSINHDDDDDESDDDFLQLAHRSKRESARGTGQGNFNPILPPPPSSMRPVHVDSGAMDFLSGDVYKPQETFENVKPPSTSQSSNHDYSAPIFDEPVPQSKSPEHALFTKPVYDQTEQLPPAPWETQEPRKYPPSMSARTNKRPEYFQHNVPQHSSSASESSYDDLLGQSRNLSLNPTASAAPVTPPKKDDKPEDILFKDLMDFAKTRTSSSSSSKPNNQNNKPF</sequence>
<evidence type="ECO:0000250" key="1">
    <source>
        <dbReference type="UniProtKB" id="Q6NQK0"/>
    </source>
</evidence>
<evidence type="ECO:0000255" key="2">
    <source>
        <dbReference type="PROSITE-ProRule" id="PRU00218"/>
    </source>
</evidence>
<evidence type="ECO:0000255" key="3">
    <source>
        <dbReference type="PROSITE-ProRule" id="PRU00373"/>
    </source>
</evidence>
<evidence type="ECO:0000256" key="4">
    <source>
        <dbReference type="SAM" id="MobiDB-lite"/>
    </source>
</evidence>
<evidence type="ECO:0000269" key="5">
    <source>
    </source>
</evidence>
<evidence type="ECO:0000303" key="6">
    <source>
    </source>
</evidence>
<evidence type="ECO:0000303" key="7">
    <source>
    </source>
</evidence>
<evidence type="ECO:0000305" key="8"/>
<evidence type="ECO:0000305" key="9">
    <source>
    </source>
</evidence>
<evidence type="ECO:0000312" key="10">
    <source>
        <dbReference type="Araport" id="AT1G21380"/>
    </source>
</evidence>
<evidence type="ECO:0000312" key="11">
    <source>
        <dbReference type="EMBL" id="AAF87893.1"/>
    </source>
</evidence>
<evidence type="ECO:0007744" key="12">
    <source>
    </source>
</evidence>
<name>TOL3_ARATH</name>
<dbReference type="EMBL" id="AC015447">
    <property type="protein sequence ID" value="AAF87893.1"/>
    <property type="molecule type" value="Genomic_DNA"/>
</dbReference>
<dbReference type="EMBL" id="CP002684">
    <property type="protein sequence ID" value="AEE30096.1"/>
    <property type="molecule type" value="Genomic_DNA"/>
</dbReference>
<dbReference type="EMBL" id="AY034974">
    <property type="protein sequence ID" value="AAK59479.1"/>
    <property type="molecule type" value="mRNA"/>
</dbReference>
<dbReference type="EMBL" id="AY062980">
    <property type="protein sequence ID" value="AAL34154.1"/>
    <property type="molecule type" value="mRNA"/>
</dbReference>
<dbReference type="PIR" id="H86346">
    <property type="entry name" value="H86346"/>
</dbReference>
<dbReference type="RefSeq" id="NP_564138.1">
    <property type="nucleotide sequence ID" value="NM_101990.4"/>
</dbReference>
<dbReference type="SMR" id="Q9LPL6"/>
<dbReference type="FunCoup" id="Q9LPL6">
    <property type="interactions" value="3269"/>
</dbReference>
<dbReference type="STRING" id="3702.Q9LPL6"/>
<dbReference type="GlyGen" id="Q9LPL6">
    <property type="glycosylation" value="1 site"/>
</dbReference>
<dbReference type="iPTMnet" id="Q9LPL6"/>
<dbReference type="PaxDb" id="3702-AT1G21380.1"/>
<dbReference type="ProteomicsDB" id="234619"/>
<dbReference type="EnsemblPlants" id="AT1G21380.1">
    <property type="protein sequence ID" value="AT1G21380.1"/>
    <property type="gene ID" value="AT1G21380"/>
</dbReference>
<dbReference type="GeneID" id="838737"/>
<dbReference type="Gramene" id="AT1G21380.1">
    <property type="protein sequence ID" value="AT1G21380.1"/>
    <property type="gene ID" value="AT1G21380"/>
</dbReference>
<dbReference type="KEGG" id="ath:AT1G21380"/>
<dbReference type="Araport" id="AT1G21380"/>
<dbReference type="TAIR" id="AT1G21380"/>
<dbReference type="eggNOG" id="KOG1087">
    <property type="taxonomic scope" value="Eukaryota"/>
</dbReference>
<dbReference type="HOGENOM" id="CLU_026748_2_1_1"/>
<dbReference type="InParanoid" id="Q9LPL6"/>
<dbReference type="OMA" id="INMEPSQ"/>
<dbReference type="OrthoDB" id="2018246at2759"/>
<dbReference type="PhylomeDB" id="Q9LPL6"/>
<dbReference type="PRO" id="PR:Q9LPL6"/>
<dbReference type="Proteomes" id="UP000006548">
    <property type="component" value="Chromosome 1"/>
</dbReference>
<dbReference type="ExpressionAtlas" id="Q9LPL6">
    <property type="expression patterns" value="baseline and differential"/>
</dbReference>
<dbReference type="GO" id="GO:0005737">
    <property type="term" value="C:cytoplasm"/>
    <property type="evidence" value="ECO:0007669"/>
    <property type="project" value="UniProtKB-ARBA"/>
</dbReference>
<dbReference type="GO" id="GO:0016020">
    <property type="term" value="C:membrane"/>
    <property type="evidence" value="ECO:0007669"/>
    <property type="project" value="UniProtKB-SubCell"/>
</dbReference>
<dbReference type="GO" id="GO:0035091">
    <property type="term" value="F:phosphatidylinositol binding"/>
    <property type="evidence" value="ECO:0007669"/>
    <property type="project" value="InterPro"/>
</dbReference>
<dbReference type="GO" id="GO:0043130">
    <property type="term" value="F:ubiquitin binding"/>
    <property type="evidence" value="ECO:0007669"/>
    <property type="project" value="InterPro"/>
</dbReference>
<dbReference type="GO" id="GO:0043328">
    <property type="term" value="P:protein transport to vacuole involved in ubiquitin-dependent protein catabolic process via the multivesicular body sorting pathway"/>
    <property type="evidence" value="ECO:0007669"/>
    <property type="project" value="InterPro"/>
</dbReference>
<dbReference type="CDD" id="cd14231">
    <property type="entry name" value="GAT_GGA-like_plant"/>
    <property type="match status" value="1"/>
</dbReference>
<dbReference type="CDD" id="cd03561">
    <property type="entry name" value="VHS"/>
    <property type="match status" value="1"/>
</dbReference>
<dbReference type="FunFam" id="1.25.40.90:FF:000028">
    <property type="entry name" value="TOM1-like protein 2"/>
    <property type="match status" value="1"/>
</dbReference>
<dbReference type="Gene3D" id="1.20.58.160">
    <property type="match status" value="1"/>
</dbReference>
<dbReference type="Gene3D" id="1.25.40.90">
    <property type="match status" value="1"/>
</dbReference>
<dbReference type="InterPro" id="IPR008942">
    <property type="entry name" value="ENTH_VHS"/>
</dbReference>
<dbReference type="InterPro" id="IPR004152">
    <property type="entry name" value="GAT_dom"/>
</dbReference>
<dbReference type="InterPro" id="IPR038425">
    <property type="entry name" value="GAT_sf"/>
</dbReference>
<dbReference type="InterPro" id="IPR044836">
    <property type="entry name" value="TOL_plant"/>
</dbReference>
<dbReference type="InterPro" id="IPR014645">
    <property type="entry name" value="TOM1"/>
</dbReference>
<dbReference type="InterPro" id="IPR002014">
    <property type="entry name" value="VHS_dom"/>
</dbReference>
<dbReference type="PANTHER" id="PTHR45898">
    <property type="entry name" value="TOM1-LIKE PROTEIN"/>
    <property type="match status" value="1"/>
</dbReference>
<dbReference type="PANTHER" id="PTHR45898:SF12">
    <property type="entry name" value="TOM1-LIKE PROTEIN 3"/>
    <property type="match status" value="1"/>
</dbReference>
<dbReference type="Pfam" id="PF03127">
    <property type="entry name" value="GAT"/>
    <property type="match status" value="1"/>
</dbReference>
<dbReference type="Pfam" id="PF00790">
    <property type="entry name" value="VHS"/>
    <property type="match status" value="1"/>
</dbReference>
<dbReference type="PIRSF" id="PIRSF036948">
    <property type="entry name" value="TOM1"/>
    <property type="match status" value="1"/>
</dbReference>
<dbReference type="SMART" id="SM00288">
    <property type="entry name" value="VHS"/>
    <property type="match status" value="1"/>
</dbReference>
<dbReference type="SUPFAM" id="SSF48464">
    <property type="entry name" value="ENTH/VHS domain"/>
    <property type="match status" value="1"/>
</dbReference>
<dbReference type="SUPFAM" id="SSF89009">
    <property type="entry name" value="GAT-like domain"/>
    <property type="match status" value="1"/>
</dbReference>
<dbReference type="PROSITE" id="PS50909">
    <property type="entry name" value="GAT"/>
    <property type="match status" value="1"/>
</dbReference>
<dbReference type="PROSITE" id="PS50179">
    <property type="entry name" value="VHS"/>
    <property type="match status" value="1"/>
</dbReference>
<feature type="chain" id="PRO_0000440678" description="TOM1-like protein 3">
    <location>
        <begin position="1"/>
        <end position="506"/>
    </location>
</feature>
<feature type="domain" description="VHS" evidence="2">
    <location>
        <begin position="12"/>
        <end position="141"/>
    </location>
</feature>
<feature type="domain" description="GAT" evidence="3">
    <location>
        <begin position="180"/>
        <end position="268"/>
    </location>
</feature>
<feature type="region of interest" description="Disordered" evidence="4">
    <location>
        <begin position="266"/>
        <end position="328"/>
    </location>
</feature>
<feature type="region of interest" description="Disordered" evidence="4">
    <location>
        <begin position="351"/>
        <end position="384"/>
    </location>
</feature>
<feature type="region of interest" description="Disordered" evidence="4">
    <location>
        <begin position="398"/>
        <end position="477"/>
    </location>
</feature>
<feature type="compositionally biased region" description="Acidic residues" evidence="4">
    <location>
        <begin position="288"/>
        <end position="298"/>
    </location>
</feature>
<feature type="compositionally biased region" description="Polar residues" evidence="4">
    <location>
        <begin position="358"/>
        <end position="368"/>
    </location>
</feature>
<feature type="compositionally biased region" description="Polar residues" evidence="4">
    <location>
        <begin position="450"/>
        <end position="460"/>
    </location>
</feature>
<feature type="compositionally biased region" description="Basic and acidic residues" evidence="4">
    <location>
        <begin position="468"/>
        <end position="477"/>
    </location>
</feature>
<feature type="modified residue" description="Phosphoserine" evidence="1">
    <location>
        <position position="294"/>
    </location>
</feature>
<feature type="modified residue" description="Phosphoserine" evidence="12">
    <location>
        <position position="383"/>
    </location>
</feature>
<reference key="1">
    <citation type="journal article" date="2000" name="Nature">
        <title>Sequence and analysis of chromosome 1 of the plant Arabidopsis thaliana.</title>
        <authorList>
            <person name="Theologis A."/>
            <person name="Ecker J.R."/>
            <person name="Palm C.J."/>
            <person name="Federspiel N.A."/>
            <person name="Kaul S."/>
            <person name="White O."/>
            <person name="Alonso J."/>
            <person name="Altafi H."/>
            <person name="Araujo R."/>
            <person name="Bowman C.L."/>
            <person name="Brooks S.Y."/>
            <person name="Buehler E."/>
            <person name="Chan A."/>
            <person name="Chao Q."/>
            <person name="Chen H."/>
            <person name="Cheuk R.F."/>
            <person name="Chin C.W."/>
            <person name="Chung M.K."/>
            <person name="Conn L."/>
            <person name="Conway A.B."/>
            <person name="Conway A.R."/>
            <person name="Creasy T.H."/>
            <person name="Dewar K."/>
            <person name="Dunn P."/>
            <person name="Etgu P."/>
            <person name="Feldblyum T.V."/>
            <person name="Feng J.-D."/>
            <person name="Fong B."/>
            <person name="Fujii C.Y."/>
            <person name="Gill J.E."/>
            <person name="Goldsmith A.D."/>
            <person name="Haas B."/>
            <person name="Hansen N.F."/>
            <person name="Hughes B."/>
            <person name="Huizar L."/>
            <person name="Hunter J.L."/>
            <person name="Jenkins J."/>
            <person name="Johnson-Hopson C."/>
            <person name="Khan S."/>
            <person name="Khaykin E."/>
            <person name="Kim C.J."/>
            <person name="Koo H.L."/>
            <person name="Kremenetskaia I."/>
            <person name="Kurtz D.B."/>
            <person name="Kwan A."/>
            <person name="Lam B."/>
            <person name="Langin-Hooper S."/>
            <person name="Lee A."/>
            <person name="Lee J.M."/>
            <person name="Lenz C.A."/>
            <person name="Li J.H."/>
            <person name="Li Y.-P."/>
            <person name="Lin X."/>
            <person name="Liu S.X."/>
            <person name="Liu Z.A."/>
            <person name="Luros J.S."/>
            <person name="Maiti R."/>
            <person name="Marziali A."/>
            <person name="Militscher J."/>
            <person name="Miranda M."/>
            <person name="Nguyen M."/>
            <person name="Nierman W.C."/>
            <person name="Osborne B.I."/>
            <person name="Pai G."/>
            <person name="Peterson J."/>
            <person name="Pham P.K."/>
            <person name="Rizzo M."/>
            <person name="Rooney T."/>
            <person name="Rowley D."/>
            <person name="Sakano H."/>
            <person name="Salzberg S.L."/>
            <person name="Schwartz J.R."/>
            <person name="Shinn P."/>
            <person name="Southwick A.M."/>
            <person name="Sun H."/>
            <person name="Tallon L.J."/>
            <person name="Tambunga G."/>
            <person name="Toriumi M.J."/>
            <person name="Town C.D."/>
            <person name="Utterback T."/>
            <person name="Van Aken S."/>
            <person name="Vaysberg M."/>
            <person name="Vysotskaia V.S."/>
            <person name="Walker M."/>
            <person name="Wu D."/>
            <person name="Yu G."/>
            <person name="Fraser C.M."/>
            <person name="Venter J.C."/>
            <person name="Davis R.W."/>
        </authorList>
    </citation>
    <scope>NUCLEOTIDE SEQUENCE [LARGE SCALE GENOMIC DNA]</scope>
    <source>
        <strain>cv. Columbia</strain>
    </source>
</reference>
<reference key="2">
    <citation type="journal article" date="2017" name="Plant J.">
        <title>Araport11: a complete reannotation of the Arabidopsis thaliana reference genome.</title>
        <authorList>
            <person name="Cheng C.Y."/>
            <person name="Krishnakumar V."/>
            <person name="Chan A.P."/>
            <person name="Thibaud-Nissen F."/>
            <person name="Schobel S."/>
            <person name="Town C.D."/>
        </authorList>
    </citation>
    <scope>GENOME REANNOTATION</scope>
    <source>
        <strain>cv. Columbia</strain>
    </source>
</reference>
<reference key="3">
    <citation type="journal article" date="2003" name="Science">
        <title>Empirical analysis of transcriptional activity in the Arabidopsis genome.</title>
        <authorList>
            <person name="Yamada K."/>
            <person name="Lim J."/>
            <person name="Dale J.M."/>
            <person name="Chen H."/>
            <person name="Shinn P."/>
            <person name="Palm C.J."/>
            <person name="Southwick A.M."/>
            <person name="Wu H.C."/>
            <person name="Kim C.J."/>
            <person name="Nguyen M."/>
            <person name="Pham P.K."/>
            <person name="Cheuk R.F."/>
            <person name="Karlin-Newmann G."/>
            <person name="Liu S.X."/>
            <person name="Lam B."/>
            <person name="Sakano H."/>
            <person name="Wu T."/>
            <person name="Yu G."/>
            <person name="Miranda M."/>
            <person name="Quach H.L."/>
            <person name="Tripp M."/>
            <person name="Chang C.H."/>
            <person name="Lee J.M."/>
            <person name="Toriumi M.J."/>
            <person name="Chan M.M."/>
            <person name="Tang C.C."/>
            <person name="Onodera C.S."/>
            <person name="Deng J.M."/>
            <person name="Akiyama K."/>
            <person name="Ansari Y."/>
            <person name="Arakawa T."/>
            <person name="Banh J."/>
            <person name="Banno F."/>
            <person name="Bowser L."/>
            <person name="Brooks S.Y."/>
            <person name="Carninci P."/>
            <person name="Chao Q."/>
            <person name="Choy N."/>
            <person name="Enju A."/>
            <person name="Goldsmith A.D."/>
            <person name="Gurjal M."/>
            <person name="Hansen N.F."/>
            <person name="Hayashizaki Y."/>
            <person name="Johnson-Hopson C."/>
            <person name="Hsuan V.W."/>
            <person name="Iida K."/>
            <person name="Karnes M."/>
            <person name="Khan S."/>
            <person name="Koesema E."/>
            <person name="Ishida J."/>
            <person name="Jiang P.X."/>
            <person name="Jones T."/>
            <person name="Kawai J."/>
            <person name="Kamiya A."/>
            <person name="Meyers C."/>
            <person name="Nakajima M."/>
            <person name="Narusaka M."/>
            <person name="Seki M."/>
            <person name="Sakurai T."/>
            <person name="Satou M."/>
            <person name="Tamse R."/>
            <person name="Vaysberg M."/>
            <person name="Wallender E.K."/>
            <person name="Wong C."/>
            <person name="Yamamura Y."/>
            <person name="Yuan S."/>
            <person name="Shinozaki K."/>
            <person name="Davis R.W."/>
            <person name="Theologis A."/>
            <person name="Ecker J.R."/>
        </authorList>
    </citation>
    <scope>NUCLEOTIDE SEQUENCE [LARGE SCALE MRNA]</scope>
    <source>
        <strain>cv. Columbia</strain>
    </source>
</reference>
<reference key="4">
    <citation type="journal article" date="2006" name="Trends Plant Sci.">
        <title>Exploring the ESCRTing machinery in eukaryotes.</title>
        <authorList>
            <person name="Winter V."/>
            <person name="Hauser M.-T."/>
        </authorList>
    </citation>
    <scope>GENE FAMILY</scope>
    <scope>REVIEW</scope>
</reference>
<reference key="5">
    <citation type="journal article" date="2009" name="Plant Physiol.">
        <title>Large-scale Arabidopsis phosphoproteome profiling reveals novel chloroplast kinase substrates and phosphorylation networks.</title>
        <authorList>
            <person name="Reiland S."/>
            <person name="Messerli G."/>
            <person name="Baerenfaller K."/>
            <person name="Gerrits B."/>
            <person name="Endler A."/>
            <person name="Grossmann J."/>
            <person name="Gruissem W."/>
            <person name="Baginsky S."/>
        </authorList>
    </citation>
    <scope>PHOSPHORYLATION [LARGE SCALE ANALYSIS] AT SER-383</scope>
    <scope>IDENTIFICATION BY MASS SPECTROMETRY [LARGE SCALE ANALYSIS]</scope>
</reference>
<reference key="6">
    <citation type="journal article" date="2011" name="Front. Plant Sci.">
        <title>Protein-protein interaction network and subcellular localization of the Arabidopsis thaliana ESCRT machinery.</title>
        <authorList>
            <person name="Richardson L.G."/>
            <person name="Howard A.S."/>
            <person name="Khuu N."/>
            <person name="Gidda S.K."/>
            <person name="McCartney A."/>
            <person name="Morphy B.J."/>
            <person name="Mullen R.T."/>
        </authorList>
    </citation>
    <scope>GENE FAMILY</scope>
    <scope>NOMENCLATURE</scope>
</reference>
<reference key="7">
    <citation type="journal article" date="2013" name="Curr. Biol.">
        <title>Arabidopsis TOL proteins act as gatekeepers for vacuolar sorting of PIN2 plasma membrane protein.</title>
        <authorList>
            <person name="Korbei B."/>
            <person name="Moulinier-Anzola J."/>
            <person name="De-Araujo L."/>
            <person name="Lucyshyn D."/>
            <person name="Retzer K."/>
            <person name="Khan M.A."/>
            <person name="Luschnig C."/>
        </authorList>
    </citation>
    <scope>GENE FAMILY</scope>
    <scope>NOMENCLATURE</scope>
</reference>
<reference key="8">
    <citation type="journal article" date="2014" name="Plant Signal. Behav.">
        <title>Expression of Arabidopsis TOL genes.</title>
        <authorList>
            <person name="Moulinier-Anzola J."/>
            <person name="De-Araujo L."/>
            <person name="Korbei B."/>
        </authorList>
    </citation>
    <scope>TISSUE SPECIFICITY</scope>
</reference>
<gene>
    <name evidence="7" type="primary">TOL3</name>
    <name evidence="6" type="synonym">TOM1F</name>
    <name evidence="10" type="ordered locus">At1g21380</name>
    <name evidence="11" type="ORF">F24J8.3</name>
</gene>
<keyword id="KW-0472">Membrane</keyword>
<keyword id="KW-0597">Phosphoprotein</keyword>
<keyword id="KW-0653">Protein transport</keyword>
<keyword id="KW-1185">Reference proteome</keyword>
<keyword id="KW-0813">Transport</keyword>
<proteinExistence type="evidence at protein level"/>
<organism>
    <name type="scientific">Arabidopsis thaliana</name>
    <name type="common">Mouse-ear cress</name>
    <dbReference type="NCBI Taxonomy" id="3702"/>
    <lineage>
        <taxon>Eukaryota</taxon>
        <taxon>Viridiplantae</taxon>
        <taxon>Streptophyta</taxon>
        <taxon>Embryophyta</taxon>
        <taxon>Tracheophyta</taxon>
        <taxon>Spermatophyta</taxon>
        <taxon>Magnoliopsida</taxon>
        <taxon>eudicotyledons</taxon>
        <taxon>Gunneridae</taxon>
        <taxon>Pentapetalae</taxon>
        <taxon>rosids</taxon>
        <taxon>malvids</taxon>
        <taxon>Brassicales</taxon>
        <taxon>Brassicaceae</taxon>
        <taxon>Camelineae</taxon>
        <taxon>Arabidopsis</taxon>
    </lineage>
</organism>
<protein>
    <recommendedName>
        <fullName evidence="8">TOM1-like protein 3</fullName>
    </recommendedName>
</protein>